<evidence type="ECO:0000255" key="1"/>
<evidence type="ECO:0000255" key="2">
    <source>
        <dbReference type="PROSITE-ProRule" id="PRU00521"/>
    </source>
</evidence>
<evidence type="ECO:0000305" key="3"/>
<keyword id="KW-1003">Cell membrane</keyword>
<keyword id="KW-1015">Disulfide bond</keyword>
<keyword id="KW-0297">G-protein coupled receptor</keyword>
<keyword id="KW-0325">Glycoprotein</keyword>
<keyword id="KW-0472">Membrane</keyword>
<keyword id="KW-0552">Olfaction</keyword>
<keyword id="KW-0675">Receptor</keyword>
<keyword id="KW-1185">Reference proteome</keyword>
<keyword id="KW-0716">Sensory transduction</keyword>
<keyword id="KW-0807">Transducer</keyword>
<keyword id="KW-0812">Transmembrane</keyword>
<keyword id="KW-1133">Transmembrane helix</keyword>
<accession>Q96RA2</accession>
<accession>Q6IFJ7</accession>
<accession>Q8N133</accession>
<proteinExistence type="evidence at protein level"/>
<organism>
    <name type="scientific">Homo sapiens</name>
    <name type="common">Human</name>
    <dbReference type="NCBI Taxonomy" id="9606"/>
    <lineage>
        <taxon>Eukaryota</taxon>
        <taxon>Metazoa</taxon>
        <taxon>Chordata</taxon>
        <taxon>Craniata</taxon>
        <taxon>Vertebrata</taxon>
        <taxon>Euteleostomi</taxon>
        <taxon>Mammalia</taxon>
        <taxon>Eutheria</taxon>
        <taxon>Euarchontoglires</taxon>
        <taxon>Primates</taxon>
        <taxon>Haplorrhini</taxon>
        <taxon>Catarrhini</taxon>
        <taxon>Hominidae</taxon>
        <taxon>Homo</taxon>
    </lineage>
</organism>
<gene>
    <name type="primary">OR7D2</name>
</gene>
<dbReference type="EMBL" id="AB065928">
    <property type="protein sequence ID" value="BAC06143.1"/>
    <property type="molecule type" value="Genomic_DNA"/>
</dbReference>
<dbReference type="EMBL" id="AK095468">
    <property type="protein sequence ID" value="BAC04554.1"/>
    <property type="molecule type" value="mRNA"/>
</dbReference>
<dbReference type="EMBL" id="AF399537">
    <property type="protein sequence ID" value="AAK95022.1"/>
    <property type="molecule type" value="Genomic_DNA"/>
</dbReference>
<dbReference type="EMBL" id="BK004265">
    <property type="protein sequence ID" value="DAA04663.1"/>
    <property type="molecule type" value="Genomic_DNA"/>
</dbReference>
<dbReference type="CCDS" id="CCDS32900.1"/>
<dbReference type="RefSeq" id="NP_001373041.1">
    <property type="nucleotide sequence ID" value="NM_001386112.1"/>
</dbReference>
<dbReference type="RefSeq" id="NP_787079.1">
    <property type="nucleotide sequence ID" value="NM_175883.4"/>
</dbReference>
<dbReference type="RefSeq" id="XP_047294273.1">
    <property type="nucleotide sequence ID" value="XM_047438317.1"/>
</dbReference>
<dbReference type="RefSeq" id="XP_054176033.1">
    <property type="nucleotide sequence ID" value="XM_054320058.1"/>
</dbReference>
<dbReference type="SMR" id="Q96RA2"/>
<dbReference type="BioGRID" id="127840">
    <property type="interactions" value="57"/>
</dbReference>
<dbReference type="FunCoup" id="Q96RA2">
    <property type="interactions" value="464"/>
</dbReference>
<dbReference type="IntAct" id="Q96RA2">
    <property type="interactions" value="1"/>
</dbReference>
<dbReference type="STRING" id="9606.ENSP00000493200"/>
<dbReference type="GlyCosmos" id="Q96RA2">
    <property type="glycosylation" value="1 site, No reported glycans"/>
</dbReference>
<dbReference type="GlyGen" id="Q96RA2">
    <property type="glycosylation" value="1 site"/>
</dbReference>
<dbReference type="iPTMnet" id="Q96RA2"/>
<dbReference type="PhosphoSitePlus" id="Q96RA2"/>
<dbReference type="BioMuta" id="OR7D2"/>
<dbReference type="DMDM" id="37081386"/>
<dbReference type="MassIVE" id="Q96RA2"/>
<dbReference type="PaxDb" id="9606-ENSP00000345563"/>
<dbReference type="Antibodypedia" id="76442">
    <property type="antibodies" value="6 antibodies from 6 providers"/>
</dbReference>
<dbReference type="DNASU" id="162998"/>
<dbReference type="Ensembl" id="ENST00000344248.4">
    <property type="protein sequence ID" value="ENSP00000345563.2"/>
    <property type="gene ID" value="ENSG00000188000.6"/>
</dbReference>
<dbReference type="Ensembl" id="ENST00000641288.2">
    <property type="protein sequence ID" value="ENSP00000493200.1"/>
    <property type="gene ID" value="ENSG00000188000.6"/>
</dbReference>
<dbReference type="Ensembl" id="ENST00000642043.1">
    <property type="protein sequence ID" value="ENSP00000492939.1"/>
    <property type="gene ID" value="ENSG00000188000.6"/>
</dbReference>
<dbReference type="GeneID" id="162998"/>
<dbReference type="KEGG" id="hsa:162998"/>
<dbReference type="MANE-Select" id="ENST00000641288.2">
    <property type="protein sequence ID" value="ENSP00000493200.1"/>
    <property type="RefSeq nucleotide sequence ID" value="NM_175883.4"/>
    <property type="RefSeq protein sequence ID" value="NP_787079.1"/>
</dbReference>
<dbReference type="UCSC" id="uc002mkz.1">
    <property type="organism name" value="human"/>
</dbReference>
<dbReference type="AGR" id="HGNC:8378"/>
<dbReference type="CTD" id="162998"/>
<dbReference type="GeneCards" id="OR7D2"/>
<dbReference type="HGNC" id="HGNC:8378">
    <property type="gene designation" value="OR7D2"/>
</dbReference>
<dbReference type="HPA" id="ENSG00000188000">
    <property type="expression patterns" value="Tissue enhanced (testis)"/>
</dbReference>
<dbReference type="neXtProt" id="NX_Q96RA2"/>
<dbReference type="OpenTargets" id="ENSG00000188000"/>
<dbReference type="PharmGKB" id="PA32627"/>
<dbReference type="VEuPathDB" id="HostDB:ENSG00000188000"/>
<dbReference type="eggNOG" id="ENOG502QVH7">
    <property type="taxonomic scope" value="Eukaryota"/>
</dbReference>
<dbReference type="GeneTree" id="ENSGT00940000164306"/>
<dbReference type="HOGENOM" id="CLU_012526_1_0_1"/>
<dbReference type="InParanoid" id="Q96RA2"/>
<dbReference type="OMA" id="MLVSIHT"/>
<dbReference type="OrthoDB" id="9444602at2759"/>
<dbReference type="PAN-GO" id="Q96RA2">
    <property type="GO annotations" value="3 GO annotations based on evolutionary models"/>
</dbReference>
<dbReference type="PhylomeDB" id="Q96RA2"/>
<dbReference type="TreeFam" id="TF337210"/>
<dbReference type="PathwayCommons" id="Q96RA2"/>
<dbReference type="Reactome" id="R-HSA-9752946">
    <property type="pathway name" value="Expression and translocation of olfactory receptors"/>
</dbReference>
<dbReference type="SignaLink" id="Q96RA2"/>
<dbReference type="BioGRID-ORCS" id="162998">
    <property type="hits" value="14 hits in 754 CRISPR screens"/>
</dbReference>
<dbReference type="ChiTaRS" id="OR7D2">
    <property type="organism name" value="human"/>
</dbReference>
<dbReference type="GeneWiki" id="OR7D2"/>
<dbReference type="GenomeRNAi" id="162998"/>
<dbReference type="Pharos" id="Q96RA2">
    <property type="development level" value="Tdark"/>
</dbReference>
<dbReference type="PRO" id="PR:Q96RA2"/>
<dbReference type="Proteomes" id="UP000005640">
    <property type="component" value="Chromosome 19"/>
</dbReference>
<dbReference type="RNAct" id="Q96RA2">
    <property type="molecule type" value="protein"/>
</dbReference>
<dbReference type="Bgee" id="ENSG00000188000">
    <property type="expression patterns" value="Expressed in male germ line stem cell (sensu Vertebrata) in testis and 116 other cell types or tissues"/>
</dbReference>
<dbReference type="GO" id="GO:0005886">
    <property type="term" value="C:plasma membrane"/>
    <property type="evidence" value="ECO:0000318"/>
    <property type="project" value="GO_Central"/>
</dbReference>
<dbReference type="GO" id="GO:0004930">
    <property type="term" value="F:G protein-coupled receptor activity"/>
    <property type="evidence" value="ECO:0007669"/>
    <property type="project" value="UniProtKB-KW"/>
</dbReference>
<dbReference type="GO" id="GO:0004984">
    <property type="term" value="F:olfactory receptor activity"/>
    <property type="evidence" value="ECO:0000318"/>
    <property type="project" value="GO_Central"/>
</dbReference>
<dbReference type="GO" id="GO:0006355">
    <property type="term" value="P:regulation of DNA-templated transcription"/>
    <property type="evidence" value="ECO:0000314"/>
    <property type="project" value="MGI"/>
</dbReference>
<dbReference type="GO" id="GO:0007165">
    <property type="term" value="P:signal transduction"/>
    <property type="evidence" value="ECO:0000318"/>
    <property type="project" value="GO_Central"/>
</dbReference>
<dbReference type="CDD" id="cd15234">
    <property type="entry name" value="7tmA_OR7-like"/>
    <property type="match status" value="1"/>
</dbReference>
<dbReference type="FunFam" id="1.20.1070.10:FF:000009">
    <property type="entry name" value="Olfactory receptor"/>
    <property type="match status" value="1"/>
</dbReference>
<dbReference type="Gene3D" id="1.20.1070.10">
    <property type="entry name" value="Rhodopsin 7-helix transmembrane proteins"/>
    <property type="match status" value="1"/>
</dbReference>
<dbReference type="InterPro" id="IPR000276">
    <property type="entry name" value="GPCR_Rhodpsn"/>
</dbReference>
<dbReference type="InterPro" id="IPR017452">
    <property type="entry name" value="GPCR_Rhodpsn_7TM"/>
</dbReference>
<dbReference type="InterPro" id="IPR000725">
    <property type="entry name" value="Olfact_rcpt"/>
</dbReference>
<dbReference type="PANTHER" id="PTHR48001">
    <property type="entry name" value="OLFACTORY RECEPTOR"/>
    <property type="match status" value="1"/>
</dbReference>
<dbReference type="Pfam" id="PF13853">
    <property type="entry name" value="7tm_4"/>
    <property type="match status" value="1"/>
</dbReference>
<dbReference type="PRINTS" id="PR00237">
    <property type="entry name" value="GPCRRHODOPSN"/>
</dbReference>
<dbReference type="PRINTS" id="PR00245">
    <property type="entry name" value="OLFACTORYR"/>
</dbReference>
<dbReference type="SUPFAM" id="SSF81321">
    <property type="entry name" value="Family A G protein-coupled receptor-like"/>
    <property type="match status" value="1"/>
</dbReference>
<dbReference type="PROSITE" id="PS00237">
    <property type="entry name" value="G_PROTEIN_RECEP_F1_1"/>
    <property type="match status" value="1"/>
</dbReference>
<dbReference type="PROSITE" id="PS50262">
    <property type="entry name" value="G_PROTEIN_RECEP_F1_2"/>
    <property type="match status" value="1"/>
</dbReference>
<sequence>MEAGNQTGFLEFILLGLSEDPELQPFIFGLFLSMYLVTVLGNLLIILAISSDSHLHTPMYFFLSNLSWVDICFSTCIVPKMLVNIQTENKAISYMDCLTQVYFSMFFPILDTLLLTVMAYDRFVAVCHPLHYMIIMNPHLCGLLVFVTWLIGVMTSLLHISLMMHLIFCKDFEIPHFFCELTYILQLACSDTFLNSTLIYFMTGVLGVFPLLGIIFSYSRIASSIRKMSSSGGKQKALSTCGSHLSVVSLFYGTGIGVHFTSAVTHSSQKISVASVMYTVVTPMLNPFIYSLRNKDVKGALGSLLSRAASCL</sequence>
<reference key="1">
    <citation type="submission" date="2001-07" db="EMBL/GenBank/DDBJ databases">
        <title>Genome-wide discovery and analysis of human seven transmembrane helix receptor genes.</title>
        <authorList>
            <person name="Suwa M."/>
            <person name="Sato T."/>
            <person name="Okouchi I."/>
            <person name="Arita M."/>
            <person name="Futami K."/>
            <person name="Matsumoto S."/>
            <person name="Tsutsumi S."/>
            <person name="Aburatani H."/>
            <person name="Asai K."/>
            <person name="Akiyama Y."/>
        </authorList>
    </citation>
    <scope>NUCLEOTIDE SEQUENCE [GENOMIC DNA]</scope>
</reference>
<reference key="2">
    <citation type="journal article" date="2004" name="Nat. Genet.">
        <title>Complete sequencing and characterization of 21,243 full-length human cDNAs.</title>
        <authorList>
            <person name="Ota T."/>
            <person name="Suzuki Y."/>
            <person name="Nishikawa T."/>
            <person name="Otsuki T."/>
            <person name="Sugiyama T."/>
            <person name="Irie R."/>
            <person name="Wakamatsu A."/>
            <person name="Hayashi K."/>
            <person name="Sato H."/>
            <person name="Nagai K."/>
            <person name="Kimura K."/>
            <person name="Makita H."/>
            <person name="Sekine M."/>
            <person name="Obayashi M."/>
            <person name="Nishi T."/>
            <person name="Shibahara T."/>
            <person name="Tanaka T."/>
            <person name="Ishii S."/>
            <person name="Yamamoto J."/>
            <person name="Saito K."/>
            <person name="Kawai Y."/>
            <person name="Isono Y."/>
            <person name="Nakamura Y."/>
            <person name="Nagahari K."/>
            <person name="Murakami K."/>
            <person name="Yasuda T."/>
            <person name="Iwayanagi T."/>
            <person name="Wagatsuma M."/>
            <person name="Shiratori A."/>
            <person name="Sudo H."/>
            <person name="Hosoiri T."/>
            <person name="Kaku Y."/>
            <person name="Kodaira H."/>
            <person name="Kondo H."/>
            <person name="Sugawara M."/>
            <person name="Takahashi M."/>
            <person name="Kanda K."/>
            <person name="Yokoi T."/>
            <person name="Furuya T."/>
            <person name="Kikkawa E."/>
            <person name="Omura Y."/>
            <person name="Abe K."/>
            <person name="Kamihara K."/>
            <person name="Katsuta N."/>
            <person name="Sato K."/>
            <person name="Tanikawa M."/>
            <person name="Yamazaki M."/>
            <person name="Ninomiya K."/>
            <person name="Ishibashi T."/>
            <person name="Yamashita H."/>
            <person name="Murakawa K."/>
            <person name="Fujimori K."/>
            <person name="Tanai H."/>
            <person name="Kimata M."/>
            <person name="Watanabe M."/>
            <person name="Hiraoka S."/>
            <person name="Chiba Y."/>
            <person name="Ishida S."/>
            <person name="Ono Y."/>
            <person name="Takiguchi S."/>
            <person name="Watanabe S."/>
            <person name="Yosida M."/>
            <person name="Hotuta T."/>
            <person name="Kusano J."/>
            <person name="Kanehori K."/>
            <person name="Takahashi-Fujii A."/>
            <person name="Hara H."/>
            <person name="Tanase T.-O."/>
            <person name="Nomura Y."/>
            <person name="Togiya S."/>
            <person name="Komai F."/>
            <person name="Hara R."/>
            <person name="Takeuchi K."/>
            <person name="Arita M."/>
            <person name="Imose N."/>
            <person name="Musashino K."/>
            <person name="Yuuki H."/>
            <person name="Oshima A."/>
            <person name="Sasaki N."/>
            <person name="Aotsuka S."/>
            <person name="Yoshikawa Y."/>
            <person name="Matsunawa H."/>
            <person name="Ichihara T."/>
            <person name="Shiohata N."/>
            <person name="Sano S."/>
            <person name="Moriya S."/>
            <person name="Momiyama H."/>
            <person name="Satoh N."/>
            <person name="Takami S."/>
            <person name="Terashima Y."/>
            <person name="Suzuki O."/>
            <person name="Nakagawa S."/>
            <person name="Senoh A."/>
            <person name="Mizoguchi H."/>
            <person name="Goto Y."/>
            <person name="Shimizu F."/>
            <person name="Wakebe H."/>
            <person name="Hishigaki H."/>
            <person name="Watanabe T."/>
            <person name="Sugiyama A."/>
            <person name="Takemoto M."/>
            <person name="Kawakami B."/>
            <person name="Yamazaki M."/>
            <person name="Watanabe K."/>
            <person name="Kumagai A."/>
            <person name="Itakura S."/>
            <person name="Fukuzumi Y."/>
            <person name="Fujimori Y."/>
            <person name="Komiyama M."/>
            <person name="Tashiro H."/>
            <person name="Tanigami A."/>
            <person name="Fujiwara T."/>
            <person name="Ono T."/>
            <person name="Yamada K."/>
            <person name="Fujii Y."/>
            <person name="Ozaki K."/>
            <person name="Hirao M."/>
            <person name="Ohmori Y."/>
            <person name="Kawabata A."/>
            <person name="Hikiji T."/>
            <person name="Kobatake N."/>
            <person name="Inagaki H."/>
            <person name="Ikema Y."/>
            <person name="Okamoto S."/>
            <person name="Okitani R."/>
            <person name="Kawakami T."/>
            <person name="Noguchi S."/>
            <person name="Itoh T."/>
            <person name="Shigeta K."/>
            <person name="Senba T."/>
            <person name="Matsumura K."/>
            <person name="Nakajima Y."/>
            <person name="Mizuno T."/>
            <person name="Morinaga M."/>
            <person name="Sasaki M."/>
            <person name="Togashi T."/>
            <person name="Oyama M."/>
            <person name="Hata H."/>
            <person name="Watanabe M."/>
            <person name="Komatsu T."/>
            <person name="Mizushima-Sugano J."/>
            <person name="Satoh T."/>
            <person name="Shirai Y."/>
            <person name="Takahashi Y."/>
            <person name="Nakagawa K."/>
            <person name="Okumura K."/>
            <person name="Nagase T."/>
            <person name="Nomura N."/>
            <person name="Kikuchi H."/>
            <person name="Masuho Y."/>
            <person name="Yamashita R."/>
            <person name="Nakai K."/>
            <person name="Yada T."/>
            <person name="Nakamura Y."/>
            <person name="Ohara O."/>
            <person name="Isogai T."/>
            <person name="Sugano S."/>
        </authorList>
    </citation>
    <scope>NUCLEOTIDE SEQUENCE [LARGE SCALE MRNA]</scope>
</reference>
<reference key="3">
    <citation type="journal article" date="2002" name="Genomics">
        <title>DEFOG: a practical scheme for deciphering families of genes.</title>
        <authorList>
            <person name="Fuchs T."/>
            <person name="Malecova B."/>
            <person name="Linhart C."/>
            <person name="Sharan R."/>
            <person name="Khen M."/>
            <person name="Herwig R."/>
            <person name="Shmulevich D."/>
            <person name="Elkon R."/>
            <person name="Steinfath M."/>
            <person name="O'Brien J.K."/>
            <person name="Radelof U."/>
            <person name="Lehrach H."/>
            <person name="Lancet D."/>
            <person name="Shamir R."/>
        </authorList>
    </citation>
    <scope>NUCLEOTIDE SEQUENCE [GENOMIC DNA] OF 68-283</scope>
</reference>
<reference key="4">
    <citation type="journal article" date="2004" name="Proc. Natl. Acad. Sci. U.S.A.">
        <title>The human olfactory receptor gene family.</title>
        <authorList>
            <person name="Malnic B."/>
            <person name="Godfrey P.A."/>
            <person name="Buck L.B."/>
        </authorList>
    </citation>
    <scope>IDENTIFICATION</scope>
</reference>
<reference key="5">
    <citation type="journal article" date="2004" name="Proc. Natl. Acad. Sci. U.S.A.">
        <authorList>
            <person name="Malnic B."/>
            <person name="Godfrey P.A."/>
            <person name="Buck L.B."/>
        </authorList>
    </citation>
    <scope>ERRATUM OF PUBMED:14983052</scope>
</reference>
<protein>
    <recommendedName>
        <fullName>Olfactory receptor 7D2</fullName>
    </recommendedName>
    <alternativeName>
        <fullName>HTPCRH03</fullName>
    </alternativeName>
    <alternativeName>
        <fullName>Olfactory receptor 19-4</fullName>
        <shortName>OR19-4</shortName>
    </alternativeName>
    <alternativeName>
        <fullName>Olfactory receptor OR19-10</fullName>
    </alternativeName>
</protein>
<name>OR7D2_HUMAN</name>
<feature type="chain" id="PRO_0000150648" description="Olfactory receptor 7D2">
    <location>
        <begin position="1"/>
        <end position="312"/>
    </location>
</feature>
<feature type="topological domain" description="Extracellular" evidence="1">
    <location>
        <begin position="1"/>
        <end position="25"/>
    </location>
</feature>
<feature type="transmembrane region" description="Helical; Name=1" evidence="1">
    <location>
        <begin position="26"/>
        <end position="46"/>
    </location>
</feature>
<feature type="topological domain" description="Cytoplasmic" evidence="1">
    <location>
        <begin position="47"/>
        <end position="54"/>
    </location>
</feature>
<feature type="transmembrane region" description="Helical; Name=2" evidence="1">
    <location>
        <begin position="55"/>
        <end position="75"/>
    </location>
</feature>
<feature type="topological domain" description="Extracellular" evidence="1">
    <location>
        <begin position="76"/>
        <end position="99"/>
    </location>
</feature>
<feature type="transmembrane region" description="Helical; Name=3" evidence="1">
    <location>
        <begin position="100"/>
        <end position="120"/>
    </location>
</feature>
<feature type="topological domain" description="Cytoplasmic" evidence="1">
    <location>
        <begin position="121"/>
        <end position="139"/>
    </location>
</feature>
<feature type="transmembrane region" description="Helical; Name=4" evidence="1">
    <location>
        <begin position="140"/>
        <end position="160"/>
    </location>
</feature>
<feature type="topological domain" description="Extracellular" evidence="1">
    <location>
        <begin position="161"/>
        <end position="197"/>
    </location>
</feature>
<feature type="transmembrane region" description="Helical; Name=5" evidence="1">
    <location>
        <begin position="198"/>
        <end position="217"/>
    </location>
</feature>
<feature type="topological domain" description="Cytoplasmic" evidence="1">
    <location>
        <begin position="218"/>
        <end position="237"/>
    </location>
</feature>
<feature type="transmembrane region" description="Helical; Name=6" evidence="1">
    <location>
        <begin position="238"/>
        <end position="258"/>
    </location>
</feature>
<feature type="topological domain" description="Extracellular" evidence="1">
    <location>
        <begin position="259"/>
        <end position="271"/>
    </location>
</feature>
<feature type="transmembrane region" description="Helical; Name=7" evidence="1">
    <location>
        <begin position="272"/>
        <end position="292"/>
    </location>
</feature>
<feature type="topological domain" description="Cytoplasmic" evidence="1">
    <location>
        <begin position="293"/>
        <end position="312"/>
    </location>
</feature>
<feature type="glycosylation site" description="N-linked (GlcNAc...) asparagine" evidence="1">
    <location>
        <position position="5"/>
    </location>
</feature>
<feature type="disulfide bond" evidence="2">
    <location>
        <begin position="97"/>
        <end position="189"/>
    </location>
</feature>
<feature type="sequence variant" id="VAR_053235" description="In dbSNP:rs13345452.">
    <original>T</original>
    <variation>M</variation>
    <location>
        <position position="197"/>
    </location>
</feature>
<comment type="function">
    <text evidence="3">Odorant receptor.</text>
</comment>
<comment type="interaction">
    <interactant intactId="EBI-12826231">
        <id>Q96RA2</id>
    </interactant>
    <interactant intactId="EBI-448407">
        <id>Q9HAT8</id>
        <label>PELI2</label>
    </interactant>
    <organismsDiffer>false</organismsDiffer>
    <experiments>3</experiments>
</comment>
<comment type="subcellular location">
    <subcellularLocation>
        <location>Cell membrane</location>
        <topology>Multi-pass membrane protein</topology>
    </subcellularLocation>
</comment>
<comment type="similarity">
    <text evidence="2">Belongs to the G-protein coupled receptor 1 family.</text>
</comment>
<comment type="online information" name="Human Olfactory Receptor Data Exploratorium (HORDE)">
    <link uri="http://genome.weizmann.ac.il/horde/card/index/symbol:OR7D2"/>
</comment>